<accession>P39769</accession>
<accession>O46097</accession>
<accession>Q9W521</accession>
<accession>Q9W522</accession>
<comment type="function">
    <text evidence="8">Polycomb group (PcG) protein. PcG proteins act by forming multiprotein complexes, which are required to maintain the transcriptionally repressive state of homeotic genes throughout development. PcG proteins are not required to initiate repression, but to maintain it during later stages of development. Component of the PcG multiprotein PRC1 complex, a complex that acts via chromatin remodeling and modification of histones; it mediates monoubiquitination of histone H2A 'Lys-118', rendering chromatin heritably changed in its expressibility. Plays a role in regulating the expression of other pair-rule genes such as eve, ftz, and H.</text>
</comment>
<comment type="subunit">
    <text evidence="4 5 6 7 9 11">Component of PRC1 complex, which contains many PcG proteins like Pc, ph, Scm, Psc, Sce and also chromatin-remodeling proteins such as histone deacetylases. This complex is distinct from the Esc/E(z) complex, at least composed of esc, E(z), Su(z)12, HDAC1/Rpd3 and Caf1-55. The 2 complexes however cooperate and interact together during the first 3 hours of development to establish PcG silencing. Interacts with the SAM domain of Scm via its SAM domain in vitro. Interacts with Trl in vivo and with corto in vitro.</text>
</comment>
<comment type="interaction">
    <interactant intactId="EBI-300360">
        <id>P39769</id>
    </interactant>
    <interactant intactId="EBI-300379">
        <id>P41046</id>
        <label>corto</label>
    </interactant>
    <organismsDiffer>false</organismsDiffer>
    <experiments>2</experiments>
</comment>
<comment type="interaction">
    <interactant intactId="EBI-300360">
        <id>P39769</id>
    </interactant>
    <interactant intactId="EBI-89256">
        <id>Q9VHA0</id>
        <label>Scm</label>
    </interactant>
    <organismsDiffer>false</organismsDiffer>
    <experiments>6</experiments>
</comment>
<comment type="subcellular location">
    <subcellularLocation>
        <location>Nucleus</location>
    </subcellularLocation>
</comment>
<comment type="tissue specificity">
    <text evidence="8">Salivary glands.</text>
</comment>
<comment type="caution">
    <text evidence="12">It is uncertain whether Met-1 or Met-9 is the initiator.</text>
</comment>
<keyword id="KW-0002">3D-structure</keyword>
<keyword id="KW-0217">Developmental protein</keyword>
<keyword id="KW-0238">DNA-binding</keyword>
<keyword id="KW-0479">Metal-binding</keyword>
<keyword id="KW-0539">Nucleus</keyword>
<keyword id="KW-0597">Phosphoprotein</keyword>
<keyword id="KW-1185">Reference proteome</keyword>
<keyword id="KW-0862">Zinc</keyword>
<keyword id="KW-0863">Zinc-finger</keyword>
<dbReference type="EMBL" id="M64750">
    <property type="status" value="NOT_ANNOTATED_CDS"/>
    <property type="molecule type" value="Genomic_DNA"/>
</dbReference>
<dbReference type="EMBL" id="X63672">
    <property type="protein sequence ID" value="CAA45211.1"/>
    <property type="molecule type" value="mRNA"/>
</dbReference>
<dbReference type="EMBL" id="AE014298">
    <property type="protein sequence ID" value="AAF45727.3"/>
    <property type="molecule type" value="Genomic_DNA"/>
</dbReference>
<dbReference type="EMBL" id="Z98269">
    <property type="protein sequence ID" value="CAB10975.1"/>
    <property type="molecule type" value="Genomic_DNA"/>
</dbReference>
<dbReference type="PIR" id="T13606">
    <property type="entry name" value="T13606"/>
</dbReference>
<dbReference type="RefSeq" id="NP_476871.2">
    <property type="nucleotide sequence ID" value="NM_057523.5"/>
</dbReference>
<dbReference type="PDB" id="1KW4">
    <property type="method" value="X-ray"/>
    <property type="resolution" value="1.75 A"/>
    <property type="chains" value="A=1502-1577"/>
</dbReference>
<dbReference type="PDB" id="1PK1">
    <property type="method" value="X-ray"/>
    <property type="resolution" value="1.80 A"/>
    <property type="chains" value="A/C=1502-1577"/>
</dbReference>
<dbReference type="PDBsum" id="1KW4"/>
<dbReference type="PDBsum" id="1PK1"/>
<dbReference type="SMR" id="P39769"/>
<dbReference type="BioGRID" id="57724">
    <property type="interactions" value="63"/>
</dbReference>
<dbReference type="ComplexPortal" id="CPX-2578">
    <property type="entry name" value="Polycomb repressive complex 1, Psc variant"/>
</dbReference>
<dbReference type="ComplexPortal" id="CPX-2590">
    <property type="entry name" value="Polycomb repressive complex 1, Su(Z)2 variant"/>
</dbReference>
<dbReference type="DIP" id="DIP-19426N"/>
<dbReference type="FunCoup" id="P39769">
    <property type="interactions" value="54"/>
</dbReference>
<dbReference type="IntAct" id="P39769">
    <property type="interactions" value="14"/>
</dbReference>
<dbReference type="MINT" id="P39769"/>
<dbReference type="STRING" id="7227.FBpp0070416"/>
<dbReference type="GlyGen" id="P39769">
    <property type="glycosylation" value="4 sites, 1 O-linked glycan (3 sites)"/>
</dbReference>
<dbReference type="iPTMnet" id="P39769"/>
<dbReference type="PaxDb" id="7227-FBpp0070416"/>
<dbReference type="DNASU" id="31181"/>
<dbReference type="EnsemblMetazoa" id="FBtr0070432">
    <property type="protein sequence ID" value="FBpp0070416"/>
    <property type="gene ID" value="FBgn0004861"/>
</dbReference>
<dbReference type="GeneID" id="31181"/>
<dbReference type="KEGG" id="dme:Dmel_CG18412"/>
<dbReference type="AGR" id="FB:FBgn0004861"/>
<dbReference type="CTD" id="31181"/>
<dbReference type="FlyBase" id="FBgn0004861">
    <property type="gene designation" value="ph-p"/>
</dbReference>
<dbReference type="VEuPathDB" id="VectorBase:FBgn0004861"/>
<dbReference type="eggNOG" id="ENOG502QS5Q">
    <property type="taxonomic scope" value="Eukaryota"/>
</dbReference>
<dbReference type="GeneTree" id="ENSGT00940000154964"/>
<dbReference type="InParanoid" id="P39769"/>
<dbReference type="OMA" id="PSNRWPR"/>
<dbReference type="OrthoDB" id="2390104at2759"/>
<dbReference type="PhylomeDB" id="P39769"/>
<dbReference type="Reactome" id="R-DME-2559580">
    <property type="pathway name" value="Oxidative Stress Induced Senescence"/>
</dbReference>
<dbReference type="Reactome" id="R-DME-3108214">
    <property type="pathway name" value="SUMOylation of DNA damage response and repair proteins"/>
</dbReference>
<dbReference type="Reactome" id="R-DME-3899300">
    <property type="pathway name" value="SUMOylation of transcription cofactors"/>
</dbReference>
<dbReference type="Reactome" id="R-DME-4570464">
    <property type="pathway name" value="SUMOylation of RNA binding proteins"/>
</dbReference>
<dbReference type="Reactome" id="R-DME-8939243">
    <property type="pathway name" value="RUNX1 interacts with co-factors whose precise effect on RUNX1 targets is not known"/>
</dbReference>
<dbReference type="Reactome" id="R-DME-8943724">
    <property type="pathway name" value="Regulation of PTEN gene transcription"/>
</dbReference>
<dbReference type="Reactome" id="R-DME-8953750">
    <property type="pathway name" value="Transcriptional Regulation by E2F6"/>
</dbReference>
<dbReference type="SignaLink" id="P39769"/>
<dbReference type="BioGRID-ORCS" id="31181">
    <property type="hits" value="0 hits in 3 CRISPR screens"/>
</dbReference>
<dbReference type="CD-CODE" id="58FDC23F">
    <property type="entry name" value="PcG body"/>
</dbReference>
<dbReference type="EvolutionaryTrace" id="P39769"/>
<dbReference type="GenomeRNAi" id="31181"/>
<dbReference type="PRO" id="PR:P39769"/>
<dbReference type="Proteomes" id="UP000000803">
    <property type="component" value="Chromosome X"/>
</dbReference>
<dbReference type="Bgee" id="FBgn0004861">
    <property type="expression patterns" value="Expressed in adult tracheocyte (Drosophila) in insect leg and 198 other cell types or tissues"/>
</dbReference>
<dbReference type="ExpressionAtlas" id="P39769">
    <property type="expression patterns" value="baseline and differential"/>
</dbReference>
<dbReference type="GO" id="GO:0005730">
    <property type="term" value="C:nucleolus"/>
    <property type="evidence" value="ECO:0000314"/>
    <property type="project" value="FlyBase"/>
</dbReference>
<dbReference type="GO" id="GO:0005634">
    <property type="term" value="C:nucleus"/>
    <property type="evidence" value="ECO:0000314"/>
    <property type="project" value="FlyBase"/>
</dbReference>
<dbReference type="GO" id="GO:0005700">
    <property type="term" value="C:polytene chromosome"/>
    <property type="evidence" value="ECO:0000314"/>
    <property type="project" value="FlyBase"/>
</dbReference>
<dbReference type="GO" id="GO:0035102">
    <property type="term" value="C:PRC1 complex"/>
    <property type="evidence" value="ECO:0000314"/>
    <property type="project" value="FlyBase"/>
</dbReference>
<dbReference type="GO" id="GO:0003682">
    <property type="term" value="F:chromatin binding"/>
    <property type="evidence" value="ECO:0000314"/>
    <property type="project" value="FlyBase"/>
</dbReference>
<dbReference type="GO" id="GO:0003677">
    <property type="term" value="F:DNA binding"/>
    <property type="evidence" value="ECO:0000314"/>
    <property type="project" value="FlyBase"/>
</dbReference>
<dbReference type="GO" id="GO:0044547">
    <property type="term" value="F:DNA topoisomerase binding"/>
    <property type="evidence" value="ECO:0000353"/>
    <property type="project" value="FlyBase"/>
</dbReference>
<dbReference type="GO" id="GO:0042393">
    <property type="term" value="F:histone binding"/>
    <property type="evidence" value="ECO:0000318"/>
    <property type="project" value="GO_Central"/>
</dbReference>
<dbReference type="GO" id="GO:0051087">
    <property type="term" value="F:protein-folding chaperone binding"/>
    <property type="evidence" value="ECO:0000314"/>
    <property type="project" value="FlyBase"/>
</dbReference>
<dbReference type="GO" id="GO:0043565">
    <property type="term" value="F:sequence-specific DNA binding"/>
    <property type="evidence" value="ECO:0000314"/>
    <property type="project" value="FlyBase"/>
</dbReference>
<dbReference type="GO" id="GO:0008270">
    <property type="term" value="F:zinc ion binding"/>
    <property type="evidence" value="ECO:0007669"/>
    <property type="project" value="UniProtKB-KW"/>
</dbReference>
<dbReference type="GO" id="GO:0009948">
    <property type="term" value="P:anterior/posterior axis specification"/>
    <property type="evidence" value="ECO:0000315"/>
    <property type="project" value="UniProtKB"/>
</dbReference>
<dbReference type="GO" id="GO:0021954">
    <property type="term" value="P:central nervous system neuron development"/>
    <property type="evidence" value="ECO:0000315"/>
    <property type="project" value="FlyBase"/>
</dbReference>
<dbReference type="GO" id="GO:0030713">
    <property type="term" value="P:follicle cell of egg chamber stalk formation"/>
    <property type="evidence" value="ECO:0000315"/>
    <property type="project" value="FlyBase"/>
</dbReference>
<dbReference type="GO" id="GO:0030708">
    <property type="term" value="P:germarium-derived female germ-line cyst encapsulation"/>
    <property type="evidence" value="ECO:0000315"/>
    <property type="project" value="FlyBase"/>
</dbReference>
<dbReference type="GO" id="GO:0031507">
    <property type="term" value="P:heterochromatin formation"/>
    <property type="evidence" value="ECO:0000314"/>
    <property type="project" value="FlyBase"/>
</dbReference>
<dbReference type="GO" id="GO:0000070">
    <property type="term" value="P:mitotic sister chromatid segregation"/>
    <property type="evidence" value="ECO:0000315"/>
    <property type="project" value="FlyBase"/>
</dbReference>
<dbReference type="GO" id="GO:0045892">
    <property type="term" value="P:negative regulation of DNA-templated transcription"/>
    <property type="evidence" value="ECO:0000315"/>
    <property type="project" value="FlyBase"/>
</dbReference>
<dbReference type="GO" id="GO:0006357">
    <property type="term" value="P:regulation of transcription by RNA polymerase II"/>
    <property type="evidence" value="ECO:0000315"/>
    <property type="project" value="UniProtKB"/>
</dbReference>
<dbReference type="GO" id="GO:0035075">
    <property type="term" value="P:response to ecdysone"/>
    <property type="evidence" value="ECO:0000315"/>
    <property type="project" value="FlyBase"/>
</dbReference>
<dbReference type="GO" id="GO:0035186">
    <property type="term" value="P:syncytial blastoderm mitotic cell cycle"/>
    <property type="evidence" value="ECO:0000315"/>
    <property type="project" value="FlyBase"/>
</dbReference>
<dbReference type="CDD" id="cd09577">
    <property type="entry name" value="SAM_Ph1_2_3"/>
    <property type="match status" value="1"/>
</dbReference>
<dbReference type="Gene3D" id="3.30.60.160">
    <property type="match status" value="1"/>
</dbReference>
<dbReference type="Gene3D" id="1.10.150.50">
    <property type="entry name" value="Transcription Factor, Ets-1"/>
    <property type="match status" value="1"/>
</dbReference>
<dbReference type="InterPro" id="IPR051425">
    <property type="entry name" value="Formin_Homology"/>
</dbReference>
<dbReference type="InterPro" id="IPR001660">
    <property type="entry name" value="SAM"/>
</dbReference>
<dbReference type="InterPro" id="IPR013761">
    <property type="entry name" value="SAM/pointed_sf"/>
</dbReference>
<dbReference type="InterPro" id="IPR012313">
    <property type="entry name" value="Znf_FCS"/>
</dbReference>
<dbReference type="InterPro" id="IPR038603">
    <property type="entry name" value="Znf_FCS_sf"/>
</dbReference>
<dbReference type="PANTHER" id="PTHR45725:SF20">
    <property type="entry name" value="C3H1-TYPE DOMAIN-CONTAINING PROTEIN-RELATED"/>
    <property type="match status" value="1"/>
</dbReference>
<dbReference type="PANTHER" id="PTHR45725">
    <property type="entry name" value="FORMIN HOMOLOGY 2 FAMILY MEMBER"/>
    <property type="match status" value="1"/>
</dbReference>
<dbReference type="Pfam" id="PF00536">
    <property type="entry name" value="SAM_1"/>
    <property type="match status" value="1"/>
</dbReference>
<dbReference type="SMART" id="SM00454">
    <property type="entry name" value="SAM"/>
    <property type="match status" value="1"/>
</dbReference>
<dbReference type="SUPFAM" id="SSF47769">
    <property type="entry name" value="SAM/Pointed domain"/>
    <property type="match status" value="1"/>
</dbReference>
<dbReference type="PROSITE" id="PS50105">
    <property type="entry name" value="SAM_DOMAIN"/>
    <property type="match status" value="1"/>
</dbReference>
<dbReference type="PROSITE" id="PS51024">
    <property type="entry name" value="ZF_FCS"/>
    <property type="match status" value="1"/>
</dbReference>
<organism>
    <name type="scientific">Drosophila melanogaster</name>
    <name type="common">Fruit fly</name>
    <dbReference type="NCBI Taxonomy" id="7227"/>
    <lineage>
        <taxon>Eukaryota</taxon>
        <taxon>Metazoa</taxon>
        <taxon>Ecdysozoa</taxon>
        <taxon>Arthropoda</taxon>
        <taxon>Hexapoda</taxon>
        <taxon>Insecta</taxon>
        <taxon>Pterygota</taxon>
        <taxon>Neoptera</taxon>
        <taxon>Endopterygota</taxon>
        <taxon>Diptera</taxon>
        <taxon>Brachycera</taxon>
        <taxon>Muscomorpha</taxon>
        <taxon>Ephydroidea</taxon>
        <taxon>Drosophilidae</taxon>
        <taxon>Drosophila</taxon>
        <taxon>Sophophora</taxon>
    </lineage>
</organism>
<sequence length="1589" mass="167281">MDRRALKFMQKRADTESDTTTPVSTTASQGISASAILAGGTLPLKDNSNIREKPLHHNYNHNNNNSSQHSHSHQQQQQQQVGGKQLERPLKCLETLAQKAGITFDEKYDVASPPHPGIAQQQATSGTGPATGSGSVTPTSHRHGTPPTGRRQTHTPSTPNRPSAPSTPNTNCNSIARHTSLTLEKAQNPGQQVAATTTVPLQISPEQLQQFYASNPYAIQVKQEFPTHTTSGSGTELKHATNIMEVQQQLQLQQQLSEANGGGAASAGAGGAASPANSQQSQQQQHSTAISTMSPMQLAAATGGVGGDWTQGRTVQLMQPSTSFLYPQMIVSGNLLHPGGLGQQPIQVITAGKPFQGNGPQMLTTTTQNAKQMIGGQAGFAGGNYATCIPTNHNQSPQTVLFSPMNVISPQQQQNLLQSMAAAAQQQQLTQQQQQFNQQQQQQLTQQQQQLTAALAKVGVDAQGKLAQKVVQKVTTTSSAVQAATGPGSTGSTQTQQVQQVQQQQQQTTQTTQQCVQVSQSTLPVGVGGQSVQTAQLLNAGQAQQMQIPWFLQNAAGLQPFGPNQIILRNQPDGTQGMFIQQQPATQTLQTQQNQIIQCNVTQTPTKARTQLDALAPKQQQQQQQVGTTNQTQQQQLAVATAQLQQQQQQLTAAALQRPGAPVMPHNGTQVRPASSVSTQTAQNQSLLKAKMRNKQQPVRPALATLKTEIGQVAGQNKVVGHLTTVQQQQQATNLQQVVNAAGNKMVVMSTTGTPITLQNGQTLHAATAAGVDKQQQQLQLFQKQQILQQQQMLQQQIAAIQMQQQQAAVQAQQQQQQQVSQQQQVNAQQQQAVAQQQQAVAQAQQQQREQQQQVAQAQAQHQQALANATQQILQVAPNQFITSHQQQQQQQLHNQLIQQQLQQQAQAQVQAQVQAQAQQQQQQREQQQNIIQQIVVQQSGATSQQTSQQQQHHQSGQLQLSSVPFSVSSSTTPAGIATSSALQAALSASGAIFQTAKPGTCSSSSPTSSVVTITNQSSTPLVTSSTVASIQQAQTQSAQVHQHQQLISATIAGGTQQQPQGPPSLTPTTNPILAMTSMMNATVGHLSTAPPVTVSVTSTAVTSSPGQLVLLSTASSGGGGSIPATPTKETPSKGPTATLVPIGSPKTPVSGKDTCTTPKSSTPATVSASVEASSSTGEALSNGDASDRSSTPSKGATTPTSKQSNAAVQPPSSTTPNSVSGKEEPKLATCGSLTSATSTSTTTTITNGIGVARTTASTAVSTASTTTTSSGTFITSCTSTTTTTTSSISNGSKDLPKAMIKPNVLTHVIDGFIIQEANEPFPVTRQRYADKDVSDEPPKKKATMQEDIKLSGIASAPGSDMVACEQCGKMEHKAKLKRKRYCSPGCSRQAKNGIGGVGSGETNGLGTGGIVGVDAMALVDRLDEAMAEEKMQTEATPKLSESFPILGASTEVPPMSLPVQAAISAPSPLAMPLGSPLSVALPTLAPLSVVTSGAAPKSSEVNGTDRPPISSWSVDDVSNFIRELPGCQDYVDDFIQQEIDGQALLLLKEKHLVNAMGMKLGPALKIVAKVESIKEVPPPGEAKDPGAQ</sequence>
<reference key="1">
    <citation type="journal article" date="1991" name="Gene">
        <title>The complex genetic locus polyhomeotic in Drosophila melanogaster potentially encodes two homologous zinc-finger proteins.</title>
        <authorList>
            <person name="Deatrick J."/>
            <person name="Daly M."/>
            <person name="Randsholt N.B."/>
            <person name="Brock H.W."/>
        </authorList>
    </citation>
    <scope>NUCLEOTIDE SEQUENCE [GENOMIC DNA]</scope>
</reference>
<reference key="2">
    <citation type="journal article" date="1992" name="Genes Dev.">
        <title>The polyhomeotic gene of Drosophila encodes a chromatin protein that shares polytene chromosome-binding sites with Polycomb.</title>
        <authorList>
            <person name="Decamillis M."/>
            <person name="Cheng N.S."/>
            <person name="Pierre D."/>
            <person name="Brock H.W."/>
        </authorList>
    </citation>
    <scope>NUCLEOTIDE SEQUENCE [MRNA]</scope>
    <scope>FUNCTION</scope>
    <scope>TISSUE SPECIFICITY</scope>
    <source>
        <tissue>Imaginal disk</tissue>
    </source>
</reference>
<reference key="3">
    <citation type="journal article" date="2000" name="Science">
        <title>The genome sequence of Drosophila melanogaster.</title>
        <authorList>
            <person name="Adams M.D."/>
            <person name="Celniker S.E."/>
            <person name="Holt R.A."/>
            <person name="Evans C.A."/>
            <person name="Gocayne J.D."/>
            <person name="Amanatides P.G."/>
            <person name="Scherer S.E."/>
            <person name="Li P.W."/>
            <person name="Hoskins R.A."/>
            <person name="Galle R.F."/>
            <person name="George R.A."/>
            <person name="Lewis S.E."/>
            <person name="Richards S."/>
            <person name="Ashburner M."/>
            <person name="Henderson S.N."/>
            <person name="Sutton G.G."/>
            <person name="Wortman J.R."/>
            <person name="Yandell M.D."/>
            <person name="Zhang Q."/>
            <person name="Chen L.X."/>
            <person name="Brandon R.C."/>
            <person name="Rogers Y.-H.C."/>
            <person name="Blazej R.G."/>
            <person name="Champe M."/>
            <person name="Pfeiffer B.D."/>
            <person name="Wan K.H."/>
            <person name="Doyle C."/>
            <person name="Baxter E.G."/>
            <person name="Helt G."/>
            <person name="Nelson C.R."/>
            <person name="Miklos G.L.G."/>
            <person name="Abril J.F."/>
            <person name="Agbayani A."/>
            <person name="An H.-J."/>
            <person name="Andrews-Pfannkoch C."/>
            <person name="Baldwin D."/>
            <person name="Ballew R.M."/>
            <person name="Basu A."/>
            <person name="Baxendale J."/>
            <person name="Bayraktaroglu L."/>
            <person name="Beasley E.M."/>
            <person name="Beeson K.Y."/>
            <person name="Benos P.V."/>
            <person name="Berman B.P."/>
            <person name="Bhandari D."/>
            <person name="Bolshakov S."/>
            <person name="Borkova D."/>
            <person name="Botchan M.R."/>
            <person name="Bouck J."/>
            <person name="Brokstein P."/>
            <person name="Brottier P."/>
            <person name="Burtis K.C."/>
            <person name="Busam D.A."/>
            <person name="Butler H."/>
            <person name="Cadieu E."/>
            <person name="Center A."/>
            <person name="Chandra I."/>
            <person name="Cherry J.M."/>
            <person name="Cawley S."/>
            <person name="Dahlke C."/>
            <person name="Davenport L.B."/>
            <person name="Davies P."/>
            <person name="de Pablos B."/>
            <person name="Delcher A."/>
            <person name="Deng Z."/>
            <person name="Mays A.D."/>
            <person name="Dew I."/>
            <person name="Dietz S.M."/>
            <person name="Dodson K."/>
            <person name="Doup L.E."/>
            <person name="Downes M."/>
            <person name="Dugan-Rocha S."/>
            <person name="Dunkov B.C."/>
            <person name="Dunn P."/>
            <person name="Durbin K.J."/>
            <person name="Evangelista C.C."/>
            <person name="Ferraz C."/>
            <person name="Ferriera S."/>
            <person name="Fleischmann W."/>
            <person name="Fosler C."/>
            <person name="Gabrielian A.E."/>
            <person name="Garg N.S."/>
            <person name="Gelbart W.M."/>
            <person name="Glasser K."/>
            <person name="Glodek A."/>
            <person name="Gong F."/>
            <person name="Gorrell J.H."/>
            <person name="Gu Z."/>
            <person name="Guan P."/>
            <person name="Harris M."/>
            <person name="Harris N.L."/>
            <person name="Harvey D.A."/>
            <person name="Heiman T.J."/>
            <person name="Hernandez J.R."/>
            <person name="Houck J."/>
            <person name="Hostin D."/>
            <person name="Houston K.A."/>
            <person name="Howland T.J."/>
            <person name="Wei M.-H."/>
            <person name="Ibegwam C."/>
            <person name="Jalali M."/>
            <person name="Kalush F."/>
            <person name="Karpen G.H."/>
            <person name="Ke Z."/>
            <person name="Kennison J.A."/>
            <person name="Ketchum K.A."/>
            <person name="Kimmel B.E."/>
            <person name="Kodira C.D."/>
            <person name="Kraft C.L."/>
            <person name="Kravitz S."/>
            <person name="Kulp D."/>
            <person name="Lai Z."/>
            <person name="Lasko P."/>
            <person name="Lei Y."/>
            <person name="Levitsky A.A."/>
            <person name="Li J.H."/>
            <person name="Li Z."/>
            <person name="Liang Y."/>
            <person name="Lin X."/>
            <person name="Liu X."/>
            <person name="Mattei B."/>
            <person name="McIntosh T.C."/>
            <person name="McLeod M.P."/>
            <person name="McPherson D."/>
            <person name="Merkulov G."/>
            <person name="Milshina N.V."/>
            <person name="Mobarry C."/>
            <person name="Morris J."/>
            <person name="Moshrefi A."/>
            <person name="Mount S.M."/>
            <person name="Moy M."/>
            <person name="Murphy B."/>
            <person name="Murphy L."/>
            <person name="Muzny D.M."/>
            <person name="Nelson D.L."/>
            <person name="Nelson D.R."/>
            <person name="Nelson K.A."/>
            <person name="Nixon K."/>
            <person name="Nusskern D.R."/>
            <person name="Pacleb J.M."/>
            <person name="Palazzolo M."/>
            <person name="Pittman G.S."/>
            <person name="Pan S."/>
            <person name="Pollard J."/>
            <person name="Puri V."/>
            <person name="Reese M.G."/>
            <person name="Reinert K."/>
            <person name="Remington K."/>
            <person name="Saunders R.D.C."/>
            <person name="Scheeler F."/>
            <person name="Shen H."/>
            <person name="Shue B.C."/>
            <person name="Siden-Kiamos I."/>
            <person name="Simpson M."/>
            <person name="Skupski M.P."/>
            <person name="Smith T.J."/>
            <person name="Spier E."/>
            <person name="Spradling A.C."/>
            <person name="Stapleton M."/>
            <person name="Strong R."/>
            <person name="Sun E."/>
            <person name="Svirskas R."/>
            <person name="Tector C."/>
            <person name="Turner R."/>
            <person name="Venter E."/>
            <person name="Wang A.H."/>
            <person name="Wang X."/>
            <person name="Wang Z.-Y."/>
            <person name="Wassarman D.A."/>
            <person name="Weinstock G.M."/>
            <person name="Weissenbach J."/>
            <person name="Williams S.M."/>
            <person name="Woodage T."/>
            <person name="Worley K.C."/>
            <person name="Wu D."/>
            <person name="Yang S."/>
            <person name="Yao Q.A."/>
            <person name="Ye J."/>
            <person name="Yeh R.-F."/>
            <person name="Zaveri J.S."/>
            <person name="Zhan M."/>
            <person name="Zhang G."/>
            <person name="Zhao Q."/>
            <person name="Zheng L."/>
            <person name="Zheng X.H."/>
            <person name="Zhong F.N."/>
            <person name="Zhong W."/>
            <person name="Zhou X."/>
            <person name="Zhu S.C."/>
            <person name="Zhu X."/>
            <person name="Smith H.O."/>
            <person name="Gibbs R.A."/>
            <person name="Myers E.W."/>
            <person name="Rubin G.M."/>
            <person name="Venter J.C."/>
        </authorList>
    </citation>
    <scope>NUCLEOTIDE SEQUENCE [LARGE SCALE GENOMIC DNA]</scope>
    <source>
        <strain>Berkeley</strain>
    </source>
</reference>
<reference key="4">
    <citation type="journal article" date="2002" name="Genome Biol.">
        <title>Annotation of the Drosophila melanogaster euchromatic genome: a systematic review.</title>
        <authorList>
            <person name="Misra S."/>
            <person name="Crosby M.A."/>
            <person name="Mungall C.J."/>
            <person name="Matthews B.B."/>
            <person name="Campbell K.S."/>
            <person name="Hradecky P."/>
            <person name="Huang Y."/>
            <person name="Kaminker J.S."/>
            <person name="Millburn G.H."/>
            <person name="Prochnik S.E."/>
            <person name="Smith C.D."/>
            <person name="Tupy J.L."/>
            <person name="Whitfield E.J."/>
            <person name="Bayraktaroglu L."/>
            <person name="Berman B.P."/>
            <person name="Bettencourt B.R."/>
            <person name="Celniker S.E."/>
            <person name="de Grey A.D.N.J."/>
            <person name="Drysdale R.A."/>
            <person name="Harris N.L."/>
            <person name="Richter J."/>
            <person name="Russo S."/>
            <person name="Schroeder A.J."/>
            <person name="Shu S.Q."/>
            <person name="Stapleton M."/>
            <person name="Yamada C."/>
            <person name="Ashburner M."/>
            <person name="Gelbart W.M."/>
            <person name="Rubin G.M."/>
            <person name="Lewis S.E."/>
        </authorList>
    </citation>
    <scope>GENOME REANNOTATION</scope>
    <source>
        <strain>Berkeley</strain>
    </source>
</reference>
<reference key="5">
    <citation type="journal article" date="2000" name="Science">
        <title>From sequence to chromosome: the tip of the X chromosome of D. melanogaster.</title>
        <authorList>
            <person name="Benos P.V."/>
            <person name="Gatt M.K."/>
            <person name="Ashburner M."/>
            <person name="Murphy L."/>
            <person name="Harris D."/>
            <person name="Barrell B.G."/>
            <person name="Ferraz C."/>
            <person name="Vidal S."/>
            <person name="Brun C."/>
            <person name="Demailles J."/>
            <person name="Cadieu E."/>
            <person name="Dreano S."/>
            <person name="Gloux S."/>
            <person name="Lelaure V."/>
            <person name="Mottier S."/>
            <person name="Galibert F."/>
            <person name="Borkova D."/>
            <person name="Minana B."/>
            <person name="Kafatos F.C."/>
            <person name="Louis C."/>
            <person name="Siden-Kiamos I."/>
            <person name="Bolshakov S."/>
            <person name="Papagiannakis G."/>
            <person name="Spanos L."/>
            <person name="Cox S."/>
            <person name="Madueno E."/>
            <person name="de Pablos B."/>
            <person name="Modolell J."/>
            <person name="Peter A."/>
            <person name="Schoettler P."/>
            <person name="Werner M."/>
            <person name="Mourkioti F."/>
            <person name="Beinert N."/>
            <person name="Dowe G."/>
            <person name="Schaefer U."/>
            <person name="Jaeckle H."/>
            <person name="Bucheton A."/>
            <person name="Callister D.M."/>
            <person name="Campbell L.A."/>
            <person name="Darlamitsou A."/>
            <person name="Henderson N.S."/>
            <person name="McMillan P.J."/>
            <person name="Salles C."/>
            <person name="Tait E.A."/>
            <person name="Valenti P."/>
            <person name="Saunders R.D.C."/>
            <person name="Glover D.M."/>
        </authorList>
    </citation>
    <scope>NUCLEOTIDE SEQUENCE [LARGE SCALE GENOMIC DNA]</scope>
    <source>
        <strain>Oregon-R</strain>
    </source>
</reference>
<reference key="6">
    <citation type="journal article" date="1997" name="Mol. Cell. Biol.">
        <title>A domain shared by the polycomb group proteins Scm and ph mediates heterotypic and homotypic interactions.</title>
        <authorList>
            <person name="Peterson A.J."/>
            <person name="Kyba M."/>
            <person name="Bornemann D."/>
            <person name="Morgan K."/>
            <person name="Brock H.W."/>
            <person name="Simon J.A."/>
        </authorList>
    </citation>
    <scope>INTERACTION WITH SCM</scope>
    <scope>MUTAGENESIS OF TRP-1513; LEU-1545; LEU-1553; GLY-1562 AND ILE-1574</scope>
</reference>
<reference key="7">
    <citation type="journal article" date="2001" name="Nature">
        <title>A Drosophila Polycomb group complex includes Zeste and dTAFII proteins.</title>
        <authorList>
            <person name="Saurin A.J."/>
            <person name="Shao Z."/>
            <person name="Erdjument-Bromage H."/>
            <person name="Tempst P."/>
            <person name="Kingston R.E."/>
        </authorList>
    </citation>
    <scope>IDENTIFICATION IN THE PRC1 COMPLEX WITH SCE; PC AND PSC</scope>
</reference>
<reference key="8">
    <citation type="journal article" date="2001" name="Mol. Cell">
        <title>Reconstitution of a functional core polycomb repressive complex.</title>
        <authorList>
            <person name="Francis N.J."/>
            <person name="Saurin A.J."/>
            <person name="Shao Z."/>
            <person name="Kingston R.E."/>
        </authorList>
    </citation>
    <scope>IDENTIFICATION IN A PCG COMPLEX WITH SCE; PC AND PSC</scope>
</reference>
<reference key="9">
    <citation type="journal article" date="2003" name="Mech. Dev.">
        <title>Trl-GAGA directly interacts with lola like and both are part of the repressive complex of Polycomb group of genes.</title>
        <authorList>
            <person name="Mishra K."/>
            <person name="Chopra V.S."/>
            <person name="Srinivasan A."/>
            <person name="Mishra R.K."/>
        </authorList>
    </citation>
    <scope>INTERACTION WITH TRL</scope>
</reference>
<reference key="10">
    <citation type="journal article" date="2003" name="Nucleic Acids Res.">
        <title>The Drosophila Corto protein interacts with Polycomb-group proteins and the GAGA factor.</title>
        <authorList>
            <person name="Salvaing J."/>
            <person name="Lopez A."/>
            <person name="Boivin A."/>
            <person name="Deutsch J.S."/>
            <person name="Peronnet F."/>
        </authorList>
    </citation>
    <scope>INTERACTION WITH CORTO</scope>
</reference>
<reference key="11">
    <citation type="journal article" date="2008" name="J. Proteome Res.">
        <title>Phosphoproteome analysis of Drosophila melanogaster embryos.</title>
        <authorList>
            <person name="Zhai B."/>
            <person name="Villen J."/>
            <person name="Beausoleil S.A."/>
            <person name="Mintseris J."/>
            <person name="Gygi S.P."/>
        </authorList>
    </citation>
    <scope>PHOSPHORYLATION [LARGE SCALE ANALYSIS] AT SER-1145 AND THR-1148</scope>
    <scope>IDENTIFICATION BY MASS SPECTROMETRY</scope>
    <source>
        <tissue>Embryo</tissue>
    </source>
</reference>
<reference key="12">
    <citation type="journal article" date="2002" name="Nat. Struct. Biol.">
        <title>The SAM domain of polyhomeotic forms a helical polymer.</title>
        <authorList>
            <person name="Kim C.A."/>
            <person name="Gingery M."/>
            <person name="Pilpa R.M."/>
            <person name="Bowie J.U."/>
        </authorList>
    </citation>
    <scope>X-RAY CRYSTALLOGRAPHY (1.75 ANGSTROMS) OF 1502-1577</scope>
</reference>
<reference key="13">
    <citation type="journal article" date="2005" name="J. Biol. Chem.">
        <title>Structural organization of a Sex-comb-on-midleg/polyhomeotic copolymer.</title>
        <authorList>
            <person name="Kim C.A."/>
            <person name="Sawaya M.R."/>
            <person name="Cascio D."/>
            <person name="Kim W."/>
            <person name="Bowie J.U."/>
        </authorList>
    </citation>
    <scope>X-RAY CRYSTALLOGRAPHY (1.8 ANGSTROMS) OF 1502-1577</scope>
    <scope>INTERACTION WITH SCM</scope>
</reference>
<feature type="chain" id="PRO_0000058406" description="Polyhomeotic-proximal chromatin protein">
    <location>
        <begin position="1"/>
        <end position="1589"/>
    </location>
</feature>
<feature type="domain" description="SAM" evidence="1">
    <location>
        <begin position="1513"/>
        <end position="1577"/>
    </location>
</feature>
<feature type="zinc finger region" description="FCS-type" evidence="2">
    <location>
        <begin position="1356"/>
        <end position="1389"/>
    </location>
</feature>
<feature type="region of interest" description="Disordered" evidence="3">
    <location>
        <begin position="1"/>
        <end position="85"/>
    </location>
</feature>
<feature type="region of interest" description="Disordered" evidence="3">
    <location>
        <begin position="107"/>
        <end position="174"/>
    </location>
</feature>
<feature type="region of interest" description="Disordered" evidence="3">
    <location>
        <begin position="252"/>
        <end position="290"/>
    </location>
</feature>
<feature type="region of interest" description="Disordered" evidence="3">
    <location>
        <begin position="1112"/>
        <end position="1244"/>
    </location>
</feature>
<feature type="region of interest" description="Disordered" evidence="3">
    <location>
        <begin position="1260"/>
        <end position="1294"/>
    </location>
</feature>
<feature type="compositionally biased region" description="Basic and acidic residues" evidence="3">
    <location>
        <begin position="1"/>
        <end position="15"/>
    </location>
</feature>
<feature type="compositionally biased region" description="Low complexity" evidence="3">
    <location>
        <begin position="18"/>
        <end position="28"/>
    </location>
</feature>
<feature type="compositionally biased region" description="Low complexity" evidence="3">
    <location>
        <begin position="60"/>
        <end position="80"/>
    </location>
</feature>
<feature type="compositionally biased region" description="Low complexity" evidence="3">
    <location>
        <begin position="119"/>
        <end position="139"/>
    </location>
</feature>
<feature type="compositionally biased region" description="Polar residues" evidence="3">
    <location>
        <begin position="154"/>
        <end position="174"/>
    </location>
</feature>
<feature type="compositionally biased region" description="Gly residues" evidence="3">
    <location>
        <begin position="260"/>
        <end position="271"/>
    </location>
</feature>
<feature type="compositionally biased region" description="Low complexity" evidence="3">
    <location>
        <begin position="272"/>
        <end position="285"/>
    </location>
</feature>
<feature type="compositionally biased region" description="Low complexity" evidence="3">
    <location>
        <begin position="1157"/>
        <end position="1180"/>
    </location>
</feature>
<feature type="compositionally biased region" description="Polar residues" evidence="3">
    <location>
        <begin position="1189"/>
        <end position="1221"/>
    </location>
</feature>
<feature type="compositionally biased region" description="Low complexity" evidence="3">
    <location>
        <begin position="1230"/>
        <end position="1244"/>
    </location>
</feature>
<feature type="compositionally biased region" description="Low complexity" evidence="3">
    <location>
        <begin position="1260"/>
        <end position="1290"/>
    </location>
</feature>
<feature type="binding site" evidence="2">
    <location>
        <position position="1365"/>
    </location>
    <ligand>
        <name>Zn(2+)</name>
        <dbReference type="ChEBI" id="CHEBI:29105"/>
    </ligand>
</feature>
<feature type="binding site" evidence="2">
    <location>
        <position position="1368"/>
    </location>
    <ligand>
        <name>Zn(2+)</name>
        <dbReference type="ChEBI" id="CHEBI:29105"/>
    </ligand>
</feature>
<feature type="binding site" evidence="2">
    <location>
        <position position="1383"/>
    </location>
    <ligand>
        <name>Zn(2+)</name>
        <dbReference type="ChEBI" id="CHEBI:29105"/>
    </ligand>
</feature>
<feature type="binding site" evidence="2">
    <location>
        <position position="1387"/>
    </location>
    <ligand>
        <name>Zn(2+)</name>
        <dbReference type="ChEBI" id="CHEBI:29105"/>
    </ligand>
</feature>
<feature type="modified residue" description="Phosphoserine" evidence="10">
    <location>
        <position position="1145"/>
    </location>
</feature>
<feature type="modified residue" description="Phosphothreonine" evidence="10">
    <location>
        <position position="1148"/>
    </location>
</feature>
<feature type="mutagenesis site" description="Significant loss of Scm-binding activity." evidence="11">
    <original>W</original>
    <variation>A</variation>
    <location>
        <position position="1513"/>
    </location>
</feature>
<feature type="mutagenesis site" description="Little effect on Scm-binding activity." evidence="11">
    <original>L</original>
    <variation>A</variation>
    <location>
        <position position="1545"/>
    </location>
</feature>
<feature type="mutagenesis site" description="Little effect on Scm-binding activity." evidence="11">
    <original>L</original>
    <variation>A</variation>
    <location>
        <position position="1553"/>
    </location>
</feature>
<feature type="mutagenesis site" description="Significant loss of Scm-binding activity." evidence="11">
    <original>G</original>
    <variation>A</variation>
    <location>
        <position position="1562"/>
    </location>
</feature>
<feature type="mutagenesis site" description="Little effect on Scm-binding activity." evidence="11">
    <original>I</original>
    <variation>D</variation>
    <location>
        <position position="1574"/>
    </location>
</feature>
<feature type="sequence conflict" description="In Ref. 1." evidence="12" ref="1">
    <location>
        <position position="253"/>
    </location>
</feature>
<feature type="sequence conflict" description="In Ref. 5; CAB10975." evidence="12" ref="5">
    <original>V</original>
    <variation>A</variation>
    <location>
        <position position="1011"/>
    </location>
</feature>
<feature type="sequence conflict" description="In Ref. 2; CAA45211." evidence="12" ref="2">
    <original>P</original>
    <variation>L</variation>
    <location>
        <position position="1193"/>
    </location>
</feature>
<feature type="sequence conflict" description="In Ref. 5; CAB10975." evidence="12" ref="5">
    <original>I</original>
    <variation>T</variation>
    <location>
        <position position="1275"/>
    </location>
</feature>
<feature type="helix" evidence="13">
    <location>
        <begin position="1510"/>
        <end position="1512"/>
    </location>
</feature>
<feature type="helix" evidence="13">
    <location>
        <begin position="1515"/>
        <end position="1523"/>
    </location>
</feature>
<feature type="helix" evidence="13">
    <location>
        <begin position="1529"/>
        <end position="1531"/>
    </location>
</feature>
<feature type="helix" evidence="13">
    <location>
        <begin position="1532"/>
        <end position="1537"/>
    </location>
</feature>
<feature type="helix" evidence="13">
    <location>
        <begin position="1542"/>
        <end position="1547"/>
    </location>
</feature>
<feature type="helix" evidence="13">
    <location>
        <begin position="1550"/>
        <end position="1554"/>
    </location>
</feature>
<feature type="turn" evidence="13">
    <location>
        <begin position="1555"/>
        <end position="1557"/>
    </location>
</feature>
<feature type="helix" evidence="13">
    <location>
        <begin position="1561"/>
        <end position="1574"/>
    </location>
</feature>
<name>PHP_DROME</name>
<evidence type="ECO:0000255" key="1">
    <source>
        <dbReference type="PROSITE-ProRule" id="PRU00184"/>
    </source>
</evidence>
<evidence type="ECO:0000255" key="2">
    <source>
        <dbReference type="PROSITE-ProRule" id="PRU00367"/>
    </source>
</evidence>
<evidence type="ECO:0000256" key="3">
    <source>
        <dbReference type="SAM" id="MobiDB-lite"/>
    </source>
</evidence>
<evidence type="ECO:0000269" key="4">
    <source>
    </source>
</evidence>
<evidence type="ECO:0000269" key="5">
    <source>
    </source>
</evidence>
<evidence type="ECO:0000269" key="6">
    <source>
    </source>
</evidence>
<evidence type="ECO:0000269" key="7">
    <source>
    </source>
</evidence>
<evidence type="ECO:0000269" key="8">
    <source>
    </source>
</evidence>
<evidence type="ECO:0000269" key="9">
    <source>
    </source>
</evidence>
<evidence type="ECO:0000269" key="10">
    <source>
    </source>
</evidence>
<evidence type="ECO:0000269" key="11">
    <source>
    </source>
</evidence>
<evidence type="ECO:0000305" key="12"/>
<evidence type="ECO:0007829" key="13">
    <source>
        <dbReference type="PDB" id="1KW4"/>
    </source>
</evidence>
<proteinExistence type="evidence at protein level"/>
<protein>
    <recommendedName>
        <fullName>Polyhomeotic-proximal chromatin protein</fullName>
    </recommendedName>
</protein>
<gene>
    <name type="primary">ph-p</name>
    <name type="ORF">CG18412</name>
</gene>